<feature type="chain" id="PRO_0000117756" description="NADH-ubiquinone oxidoreductase chain 3">
    <location>
        <begin position="1"/>
        <end position="115"/>
    </location>
</feature>
<feature type="transmembrane region" description="Helical" evidence="3">
    <location>
        <begin position="3"/>
        <end position="23"/>
    </location>
</feature>
<feature type="transmembrane region" description="Helical" evidence="3">
    <location>
        <begin position="55"/>
        <end position="75"/>
    </location>
</feature>
<feature type="transmembrane region" description="Helical" evidence="3">
    <location>
        <begin position="86"/>
        <end position="106"/>
    </location>
</feature>
<feature type="sequence variant" description="In strain: Isolate JP52.">
    <original>T</original>
    <variation>I</variation>
    <location>
        <position position="12"/>
    </location>
</feature>
<gene>
    <name evidence="1" type="primary">MT-ND3</name>
    <name type="synonym">MTND3</name>
    <name type="synonym">NADH3</name>
    <name type="synonym">ND3</name>
</gene>
<organism>
    <name type="scientific">Lemur catta</name>
    <name type="common">Ring-tailed lemur</name>
    <dbReference type="NCBI Taxonomy" id="9447"/>
    <lineage>
        <taxon>Eukaryota</taxon>
        <taxon>Metazoa</taxon>
        <taxon>Chordata</taxon>
        <taxon>Craniata</taxon>
        <taxon>Vertebrata</taxon>
        <taxon>Euteleostomi</taxon>
        <taxon>Mammalia</taxon>
        <taxon>Eutheria</taxon>
        <taxon>Euarchontoglires</taxon>
        <taxon>Primates</taxon>
        <taxon>Strepsirrhini</taxon>
        <taxon>Lemuriformes</taxon>
        <taxon>Lemuridae</taxon>
        <taxon>Lemur</taxon>
    </lineage>
</organism>
<proteinExistence type="inferred from homology"/>
<name>NU3M_LEMCA</name>
<evidence type="ECO:0000250" key="1">
    <source>
        <dbReference type="UniProtKB" id="P03897"/>
    </source>
</evidence>
<evidence type="ECO:0000250" key="2">
    <source>
        <dbReference type="UniProtKB" id="P03898"/>
    </source>
</evidence>
<evidence type="ECO:0000255" key="3"/>
<evidence type="ECO:0000305" key="4"/>
<protein>
    <recommendedName>
        <fullName evidence="1">NADH-ubiquinone oxidoreductase chain 3</fullName>
        <ecNumber evidence="1">7.1.1.2</ecNumber>
    </recommendedName>
    <alternativeName>
        <fullName>NADH dehydrogenase subunit 3</fullName>
    </alternativeName>
</protein>
<comment type="function">
    <text evidence="1">Core subunit of the mitochondrial membrane respiratory chain NADH dehydrogenase (Complex I) which catalyzes electron transfer from NADH through the respiratory chain, using ubiquinone as an electron acceptor. Essential for the catalytic activity of complex I.</text>
</comment>
<comment type="catalytic activity">
    <reaction evidence="1">
        <text>a ubiquinone + NADH + 5 H(+)(in) = a ubiquinol + NAD(+) + 4 H(+)(out)</text>
        <dbReference type="Rhea" id="RHEA:29091"/>
        <dbReference type="Rhea" id="RHEA-COMP:9565"/>
        <dbReference type="Rhea" id="RHEA-COMP:9566"/>
        <dbReference type="ChEBI" id="CHEBI:15378"/>
        <dbReference type="ChEBI" id="CHEBI:16389"/>
        <dbReference type="ChEBI" id="CHEBI:17976"/>
        <dbReference type="ChEBI" id="CHEBI:57540"/>
        <dbReference type="ChEBI" id="CHEBI:57945"/>
        <dbReference type="EC" id="7.1.1.2"/>
    </reaction>
</comment>
<comment type="subunit">
    <text evidence="1">Core subunit of respiratory chain NADH dehydrogenase (Complex I) which is composed of 45 different subunits. Interacts with TMEM186. Interacts with TMEM242 (By similarity).</text>
</comment>
<comment type="subcellular location">
    <subcellularLocation>
        <location evidence="2">Mitochondrion inner membrane</location>
        <topology evidence="3">Multi-pass membrane protein</topology>
    </subcellularLocation>
</comment>
<comment type="similarity">
    <text evidence="4">Belongs to the complex I subunit 3 family.</text>
</comment>
<geneLocation type="mitochondrion"/>
<accession>Q8HQB1</accession>
<accession>Q94Y88</accession>
<dbReference type="EC" id="7.1.1.2" evidence="1"/>
<dbReference type="EMBL" id="AF053684">
    <property type="protein sequence ID" value="AAL18017.1"/>
    <property type="molecule type" value="Genomic_DNA"/>
</dbReference>
<dbReference type="EMBL" id="AF224569">
    <property type="protein sequence ID" value="AAN64754.1"/>
    <property type="molecule type" value="Genomic_DNA"/>
</dbReference>
<dbReference type="EMBL" id="AF224570">
    <property type="protein sequence ID" value="AAN64758.1"/>
    <property type="molecule type" value="Genomic_DNA"/>
</dbReference>
<dbReference type="EMBL" id="AJ421451">
    <property type="protein sequence ID" value="CAD13428.1"/>
    <property type="molecule type" value="Genomic_DNA"/>
</dbReference>
<dbReference type="RefSeq" id="NP_659295.1">
    <property type="nucleotide sequence ID" value="NC_004025.1"/>
</dbReference>
<dbReference type="SMR" id="Q8HQB1"/>
<dbReference type="GO" id="GO:0005743">
    <property type="term" value="C:mitochondrial inner membrane"/>
    <property type="evidence" value="ECO:0000250"/>
    <property type="project" value="UniProtKB"/>
</dbReference>
<dbReference type="GO" id="GO:0030964">
    <property type="term" value="C:NADH dehydrogenase complex"/>
    <property type="evidence" value="ECO:0007669"/>
    <property type="project" value="TreeGrafter"/>
</dbReference>
<dbReference type="GO" id="GO:0008137">
    <property type="term" value="F:NADH dehydrogenase (ubiquinone) activity"/>
    <property type="evidence" value="ECO:0000250"/>
    <property type="project" value="UniProtKB"/>
</dbReference>
<dbReference type="GO" id="GO:0006120">
    <property type="term" value="P:mitochondrial electron transport, NADH to ubiquinone"/>
    <property type="evidence" value="ECO:0000250"/>
    <property type="project" value="UniProtKB"/>
</dbReference>
<dbReference type="FunFam" id="1.20.58.1610:FF:000004">
    <property type="entry name" value="NADH-quinone oxidoreductase subunit A"/>
    <property type="match status" value="1"/>
</dbReference>
<dbReference type="Gene3D" id="1.20.58.1610">
    <property type="entry name" value="NADH:ubiquinone/plastoquinone oxidoreductase, chain 3"/>
    <property type="match status" value="1"/>
</dbReference>
<dbReference type="InterPro" id="IPR000440">
    <property type="entry name" value="NADH_UbQ/plastoQ_OxRdtase_su3"/>
</dbReference>
<dbReference type="InterPro" id="IPR038430">
    <property type="entry name" value="NDAH_ubi_oxred_su3_sf"/>
</dbReference>
<dbReference type="PANTHER" id="PTHR11058">
    <property type="entry name" value="NADH-UBIQUINONE OXIDOREDUCTASE CHAIN 3"/>
    <property type="match status" value="1"/>
</dbReference>
<dbReference type="PANTHER" id="PTHR11058:SF9">
    <property type="entry name" value="NADH-UBIQUINONE OXIDOREDUCTASE CHAIN 3"/>
    <property type="match status" value="1"/>
</dbReference>
<dbReference type="Pfam" id="PF00507">
    <property type="entry name" value="Oxidored_q4"/>
    <property type="match status" value="1"/>
</dbReference>
<sequence>MNLPLALTTSITLTLLLVTIAFWLPQLNVYTEKYSPYECGFDPMGSARLPFSMKFFLVAITFLLFDLEIALLLPLPWASQTNNLKLMLTVALVLITILAAGLAYEWLQKGLEWVE</sequence>
<keyword id="KW-0249">Electron transport</keyword>
<keyword id="KW-0472">Membrane</keyword>
<keyword id="KW-0496">Mitochondrion</keyword>
<keyword id="KW-0999">Mitochondrion inner membrane</keyword>
<keyword id="KW-0520">NAD</keyword>
<keyword id="KW-0679">Respiratory chain</keyword>
<keyword id="KW-1278">Translocase</keyword>
<keyword id="KW-0812">Transmembrane</keyword>
<keyword id="KW-1133">Transmembrane helix</keyword>
<keyword id="KW-0813">Transport</keyword>
<keyword id="KW-0830">Ubiquinone</keyword>
<reference key="1">
    <citation type="journal article" date="2002" name="J. Hum. Evol.">
        <title>Phylogenetic relationships among Lemuridae (Primates): evidence from mtDNA.</title>
        <authorList>
            <person name="Pastorini J."/>
            <person name="Forstner M.R."/>
            <person name="Martin R.D."/>
        </authorList>
    </citation>
    <scope>NUCLEOTIDE SEQUENCE [GENOMIC DNA]</scope>
    <source>
        <strain>Isolate JP3</strain>
    </source>
</reference>
<reference key="2">
    <citation type="journal article" date="2003" name="Proc. Natl. Acad. Sci. U.S.A.">
        <title>A molecular approach to comparative phylogeography of extant Malagasy lemurs.</title>
        <authorList>
            <person name="Pastorini J."/>
            <person name="Thalmann U."/>
            <person name="Martin R.D."/>
        </authorList>
    </citation>
    <scope>NUCLEOTIDE SEQUENCE [GENOMIC DNA]</scope>
    <source>
        <strain>Isolate JP3</strain>
        <strain>Isolate JP52</strain>
    </source>
</reference>
<reference key="3">
    <citation type="journal article" date="2002" name="Proc. Natl. Acad. Sci. U.S.A.">
        <title>Mammalian mitogenomic relationships and the root of the eutherian tree.</title>
        <authorList>
            <person name="Arnason U."/>
            <person name="Adegoke J.A."/>
            <person name="Bodin K."/>
            <person name="Born E.W."/>
            <person name="Esa Y.B."/>
            <person name="Gullberg A."/>
            <person name="Nilsson M."/>
            <person name="Short R.V."/>
            <person name="Xu X."/>
            <person name="Janke A."/>
        </authorList>
    </citation>
    <scope>NUCLEOTIDE SEQUENCE [GENOMIC DNA]</scope>
</reference>